<proteinExistence type="inferred from homology"/>
<name>NUSB_CHLPB</name>
<sequence>MKTYRRRIREKIIQALYTIELTGADMDSASDWLITPQIAEDSGAVRFYKQVLQSIQDHKEEIDGYITKHTFNWDMSRIAIIDKNILRMALAELLYFEDIPPKVSINEAIEIAKKFNSTDKSSKFVNGILDATYNDLKSSGKIKKCGRGLINNSSRNTSRSEEKHSTEK</sequence>
<feature type="chain" id="PRO_1000092537" description="Transcription antitermination protein NusB">
    <location>
        <begin position="1"/>
        <end position="168"/>
    </location>
</feature>
<feature type="region of interest" description="Disordered" evidence="2">
    <location>
        <begin position="147"/>
        <end position="168"/>
    </location>
</feature>
<feature type="compositionally biased region" description="Basic and acidic residues" evidence="2">
    <location>
        <begin position="158"/>
        <end position="168"/>
    </location>
</feature>
<dbReference type="EMBL" id="CP001101">
    <property type="protein sequence ID" value="ACE03459.1"/>
    <property type="molecule type" value="Genomic_DNA"/>
</dbReference>
<dbReference type="SMR" id="B3EM81"/>
<dbReference type="STRING" id="331678.Cphamn1_0496"/>
<dbReference type="KEGG" id="cpb:Cphamn1_0496"/>
<dbReference type="eggNOG" id="COG0781">
    <property type="taxonomic scope" value="Bacteria"/>
</dbReference>
<dbReference type="HOGENOM" id="CLU_087843_3_0_10"/>
<dbReference type="OrthoDB" id="9787568at2"/>
<dbReference type="GO" id="GO:0005829">
    <property type="term" value="C:cytosol"/>
    <property type="evidence" value="ECO:0007669"/>
    <property type="project" value="TreeGrafter"/>
</dbReference>
<dbReference type="GO" id="GO:0003723">
    <property type="term" value="F:RNA binding"/>
    <property type="evidence" value="ECO:0007669"/>
    <property type="project" value="UniProtKB-UniRule"/>
</dbReference>
<dbReference type="GO" id="GO:0006353">
    <property type="term" value="P:DNA-templated transcription termination"/>
    <property type="evidence" value="ECO:0007669"/>
    <property type="project" value="UniProtKB-UniRule"/>
</dbReference>
<dbReference type="GO" id="GO:0031564">
    <property type="term" value="P:transcription antitermination"/>
    <property type="evidence" value="ECO:0007669"/>
    <property type="project" value="UniProtKB-KW"/>
</dbReference>
<dbReference type="CDD" id="cd00619">
    <property type="entry name" value="Terminator_NusB"/>
    <property type="match status" value="1"/>
</dbReference>
<dbReference type="Gene3D" id="1.10.940.10">
    <property type="entry name" value="NusB-like"/>
    <property type="match status" value="1"/>
</dbReference>
<dbReference type="HAMAP" id="MF_00073">
    <property type="entry name" value="NusB"/>
    <property type="match status" value="1"/>
</dbReference>
<dbReference type="InterPro" id="IPR035926">
    <property type="entry name" value="NusB-like_sf"/>
</dbReference>
<dbReference type="InterPro" id="IPR011605">
    <property type="entry name" value="NusB_fam"/>
</dbReference>
<dbReference type="InterPro" id="IPR006027">
    <property type="entry name" value="NusB_RsmB_TIM44"/>
</dbReference>
<dbReference type="NCBIfam" id="TIGR01951">
    <property type="entry name" value="nusB"/>
    <property type="match status" value="1"/>
</dbReference>
<dbReference type="PANTHER" id="PTHR11078:SF3">
    <property type="entry name" value="ANTITERMINATION NUSB DOMAIN-CONTAINING PROTEIN"/>
    <property type="match status" value="1"/>
</dbReference>
<dbReference type="PANTHER" id="PTHR11078">
    <property type="entry name" value="N UTILIZATION SUBSTANCE PROTEIN B-RELATED"/>
    <property type="match status" value="1"/>
</dbReference>
<dbReference type="Pfam" id="PF01029">
    <property type="entry name" value="NusB"/>
    <property type="match status" value="1"/>
</dbReference>
<dbReference type="SUPFAM" id="SSF48013">
    <property type="entry name" value="NusB-like"/>
    <property type="match status" value="1"/>
</dbReference>
<gene>
    <name evidence="1" type="primary">nusB</name>
    <name type="ordered locus">Cphamn1_0496</name>
</gene>
<comment type="function">
    <text evidence="1">Involved in transcription antitermination. Required for transcription of ribosomal RNA (rRNA) genes. Binds specifically to the boxA antiterminator sequence of the ribosomal RNA (rrn) operons.</text>
</comment>
<comment type="similarity">
    <text evidence="1">Belongs to the NusB family.</text>
</comment>
<reference key="1">
    <citation type="submission" date="2008-06" db="EMBL/GenBank/DDBJ databases">
        <title>Complete sequence of Chlorobium phaeobacteroides BS1.</title>
        <authorList>
            <consortium name="US DOE Joint Genome Institute"/>
            <person name="Lucas S."/>
            <person name="Copeland A."/>
            <person name="Lapidus A."/>
            <person name="Glavina del Rio T."/>
            <person name="Dalin E."/>
            <person name="Tice H."/>
            <person name="Bruce D."/>
            <person name="Goodwin L."/>
            <person name="Pitluck S."/>
            <person name="Schmutz J."/>
            <person name="Larimer F."/>
            <person name="Land M."/>
            <person name="Hauser L."/>
            <person name="Kyrpides N."/>
            <person name="Ovchinnikova G."/>
            <person name="Li T."/>
            <person name="Liu Z."/>
            <person name="Zhao F."/>
            <person name="Overmann J."/>
            <person name="Bryant D.A."/>
            <person name="Richardson P."/>
        </authorList>
    </citation>
    <scope>NUCLEOTIDE SEQUENCE [LARGE SCALE GENOMIC DNA]</scope>
    <source>
        <strain>BS1</strain>
    </source>
</reference>
<accession>B3EM81</accession>
<keyword id="KW-0694">RNA-binding</keyword>
<keyword id="KW-0804">Transcription</keyword>
<keyword id="KW-0889">Transcription antitermination</keyword>
<keyword id="KW-0805">Transcription regulation</keyword>
<organism>
    <name type="scientific">Chlorobium phaeobacteroides (strain BS1)</name>
    <dbReference type="NCBI Taxonomy" id="331678"/>
    <lineage>
        <taxon>Bacteria</taxon>
        <taxon>Pseudomonadati</taxon>
        <taxon>Chlorobiota</taxon>
        <taxon>Chlorobiia</taxon>
        <taxon>Chlorobiales</taxon>
        <taxon>Chlorobiaceae</taxon>
        <taxon>Chlorobium/Pelodictyon group</taxon>
        <taxon>Chlorobium</taxon>
    </lineage>
</organism>
<protein>
    <recommendedName>
        <fullName evidence="1">Transcription antitermination protein NusB</fullName>
    </recommendedName>
    <alternativeName>
        <fullName evidence="1">Antitermination factor NusB</fullName>
    </alternativeName>
</protein>
<evidence type="ECO:0000255" key="1">
    <source>
        <dbReference type="HAMAP-Rule" id="MF_00073"/>
    </source>
</evidence>
<evidence type="ECO:0000256" key="2">
    <source>
        <dbReference type="SAM" id="MobiDB-lite"/>
    </source>
</evidence>